<gene>
    <name type="ordered locus">MJ1443</name>
</gene>
<name>Y1443_METJA</name>
<keyword id="KW-1003">Cell membrane</keyword>
<keyword id="KW-0472">Membrane</keyword>
<keyword id="KW-1185">Reference proteome</keyword>
<keyword id="KW-0812">Transmembrane</keyword>
<keyword id="KW-1133">Transmembrane helix</keyword>
<accession>Q58838</accession>
<organism>
    <name type="scientific">Methanocaldococcus jannaschii (strain ATCC 43067 / DSM 2661 / JAL-1 / JCM 10045 / NBRC 100440)</name>
    <name type="common">Methanococcus jannaschii</name>
    <dbReference type="NCBI Taxonomy" id="243232"/>
    <lineage>
        <taxon>Archaea</taxon>
        <taxon>Methanobacteriati</taxon>
        <taxon>Methanobacteriota</taxon>
        <taxon>Methanomada group</taxon>
        <taxon>Methanococci</taxon>
        <taxon>Methanococcales</taxon>
        <taxon>Methanocaldococcaceae</taxon>
        <taxon>Methanocaldococcus</taxon>
    </lineage>
</organism>
<evidence type="ECO:0000255" key="1"/>
<evidence type="ECO:0000305" key="2"/>
<reference key="1">
    <citation type="journal article" date="1996" name="Science">
        <title>Complete genome sequence of the methanogenic archaeon, Methanococcus jannaschii.</title>
        <authorList>
            <person name="Bult C.J."/>
            <person name="White O."/>
            <person name="Olsen G.J."/>
            <person name="Zhou L."/>
            <person name="Fleischmann R.D."/>
            <person name="Sutton G.G."/>
            <person name="Blake J.A."/>
            <person name="FitzGerald L.M."/>
            <person name="Clayton R.A."/>
            <person name="Gocayne J.D."/>
            <person name="Kerlavage A.R."/>
            <person name="Dougherty B.A."/>
            <person name="Tomb J.-F."/>
            <person name="Adams M.D."/>
            <person name="Reich C.I."/>
            <person name="Overbeek R."/>
            <person name="Kirkness E.F."/>
            <person name="Weinstock K.G."/>
            <person name="Merrick J.M."/>
            <person name="Glodek A."/>
            <person name="Scott J.L."/>
            <person name="Geoghagen N.S.M."/>
            <person name="Weidman J.F."/>
            <person name="Fuhrmann J.L."/>
            <person name="Nguyen D."/>
            <person name="Utterback T.R."/>
            <person name="Kelley J.M."/>
            <person name="Peterson J.D."/>
            <person name="Sadow P.W."/>
            <person name="Hanna M.C."/>
            <person name="Cotton M.D."/>
            <person name="Roberts K.M."/>
            <person name="Hurst M.A."/>
            <person name="Kaine B.P."/>
            <person name="Borodovsky M."/>
            <person name="Klenk H.-P."/>
            <person name="Fraser C.M."/>
            <person name="Smith H.O."/>
            <person name="Woese C.R."/>
            <person name="Venter J.C."/>
        </authorList>
    </citation>
    <scope>NUCLEOTIDE SEQUENCE [LARGE SCALE GENOMIC DNA]</scope>
    <source>
        <strain>ATCC 43067 / DSM 2661 / JAL-1 / JCM 10045 / NBRC 100440</strain>
    </source>
</reference>
<comment type="subcellular location">
    <subcellularLocation>
        <location evidence="2">Cell membrane</location>
        <topology evidence="2">Multi-pass membrane protein</topology>
    </subcellularLocation>
</comment>
<comment type="similarity">
    <text evidence="2">Belongs to the UPF0132 family.</text>
</comment>
<feature type="chain" id="PRO_0000158602" description="UPF0132 membrane protein MJ1443">
    <location>
        <begin position="1"/>
        <end position="110"/>
    </location>
</feature>
<feature type="transmembrane region" description="Helical" evidence="1">
    <location>
        <begin position="15"/>
        <end position="35"/>
    </location>
</feature>
<feature type="transmembrane region" description="Helical" evidence="1">
    <location>
        <begin position="49"/>
        <end position="69"/>
    </location>
</feature>
<feature type="transmembrane region" description="Helical" evidence="1">
    <location>
        <begin position="70"/>
        <end position="90"/>
    </location>
</feature>
<proteinExistence type="inferred from homology"/>
<protein>
    <recommendedName>
        <fullName>UPF0132 membrane protein MJ1443</fullName>
    </recommendedName>
</protein>
<sequence>MIFMGKTSLGLDENIEGALCYLFGVITGILFYILEKESKFVKFHAVQSIILFGGLWVLSIILAFIPYGWMLSGLVNLAAFILWIVCMYKAYKGEKFKLPVIGDIAEQYSQ</sequence>
<dbReference type="EMBL" id="L77117">
    <property type="protein sequence ID" value="AAB99453.1"/>
    <property type="molecule type" value="Genomic_DNA"/>
</dbReference>
<dbReference type="PIR" id="B64480">
    <property type="entry name" value="B64480"/>
</dbReference>
<dbReference type="SMR" id="Q58838"/>
<dbReference type="STRING" id="243232.MJ_1443"/>
<dbReference type="PaxDb" id="243232-MJ_1443"/>
<dbReference type="EnsemblBacteria" id="AAB99453">
    <property type="protein sequence ID" value="AAB99453"/>
    <property type="gene ID" value="MJ_1443"/>
</dbReference>
<dbReference type="KEGG" id="mja:MJ_1443"/>
<dbReference type="eggNOG" id="arCOG04344">
    <property type="taxonomic scope" value="Archaea"/>
</dbReference>
<dbReference type="HOGENOM" id="CLU_095018_3_0_2"/>
<dbReference type="InParanoid" id="Q58838"/>
<dbReference type="OrthoDB" id="329551at2157"/>
<dbReference type="PhylomeDB" id="Q58838"/>
<dbReference type="Proteomes" id="UP000000805">
    <property type="component" value="Chromosome"/>
</dbReference>
<dbReference type="GO" id="GO:0005886">
    <property type="term" value="C:plasma membrane"/>
    <property type="evidence" value="ECO:0007669"/>
    <property type="project" value="UniProtKB-SubCell"/>
</dbReference>
<dbReference type="InterPro" id="IPR019109">
    <property type="entry name" value="DUF4870"/>
</dbReference>
<dbReference type="PANTHER" id="PTHR36460">
    <property type="entry name" value="UPF0132 DOMAIN PROTEIN (AFU_ORTHOLOGUE AFUA_3G10255)"/>
    <property type="match status" value="1"/>
</dbReference>
<dbReference type="PANTHER" id="PTHR36460:SF1">
    <property type="entry name" value="UPF0132 DOMAIN PROTEIN (AFU_ORTHOLOGUE AFUA_3G10255)"/>
    <property type="match status" value="1"/>
</dbReference>
<dbReference type="Pfam" id="PF09685">
    <property type="entry name" value="DUF4870"/>
    <property type="match status" value="1"/>
</dbReference>